<reference key="1">
    <citation type="journal article" date="2005" name="J. Bacteriol.">
        <title>Completion of the genome sequence of Brucella abortus and comparison to the highly similar genomes of Brucella melitensis and Brucella suis.</title>
        <authorList>
            <person name="Halling S.M."/>
            <person name="Peterson-Burch B.D."/>
            <person name="Bricker B.J."/>
            <person name="Zuerner R.L."/>
            <person name="Qing Z."/>
            <person name="Li L.-L."/>
            <person name="Kapur V."/>
            <person name="Alt D.P."/>
            <person name="Olsen S.C."/>
        </authorList>
    </citation>
    <scope>NUCLEOTIDE SEQUENCE [LARGE SCALE GENOMIC DNA]</scope>
    <source>
        <strain>9-941</strain>
    </source>
</reference>
<dbReference type="EMBL" id="AE017223">
    <property type="protein sequence ID" value="AAX73876.1"/>
    <property type="molecule type" value="Genomic_DNA"/>
</dbReference>
<dbReference type="RefSeq" id="WP_002963616.1">
    <property type="nucleotide sequence ID" value="NC_006932.1"/>
</dbReference>
<dbReference type="SMR" id="Q57EQ8"/>
<dbReference type="EnsemblBacteria" id="AAX73876">
    <property type="protein sequence ID" value="AAX73876"/>
    <property type="gene ID" value="BruAb1_0481"/>
</dbReference>
<dbReference type="KEGG" id="bmb:BruAb1_0481"/>
<dbReference type="HOGENOM" id="CLU_108696_5_1_5"/>
<dbReference type="UniPathway" id="UPA00094"/>
<dbReference type="Proteomes" id="UP000000540">
    <property type="component" value="Chromosome I"/>
</dbReference>
<dbReference type="GO" id="GO:0005829">
    <property type="term" value="C:cytosol"/>
    <property type="evidence" value="ECO:0007669"/>
    <property type="project" value="TreeGrafter"/>
</dbReference>
<dbReference type="GO" id="GO:0016020">
    <property type="term" value="C:membrane"/>
    <property type="evidence" value="ECO:0007669"/>
    <property type="project" value="GOC"/>
</dbReference>
<dbReference type="GO" id="GO:0000035">
    <property type="term" value="F:acyl binding"/>
    <property type="evidence" value="ECO:0007669"/>
    <property type="project" value="TreeGrafter"/>
</dbReference>
<dbReference type="GO" id="GO:0000036">
    <property type="term" value="F:acyl carrier activity"/>
    <property type="evidence" value="ECO:0007669"/>
    <property type="project" value="UniProtKB-UniRule"/>
</dbReference>
<dbReference type="GO" id="GO:0031177">
    <property type="term" value="F:phosphopantetheine binding"/>
    <property type="evidence" value="ECO:0007669"/>
    <property type="project" value="InterPro"/>
</dbReference>
<dbReference type="GO" id="GO:0009245">
    <property type="term" value="P:lipid A biosynthetic process"/>
    <property type="evidence" value="ECO:0007669"/>
    <property type="project" value="TreeGrafter"/>
</dbReference>
<dbReference type="FunFam" id="1.10.1200.10:FF:000001">
    <property type="entry name" value="Acyl carrier protein"/>
    <property type="match status" value="1"/>
</dbReference>
<dbReference type="Gene3D" id="1.10.1200.10">
    <property type="entry name" value="ACP-like"/>
    <property type="match status" value="1"/>
</dbReference>
<dbReference type="HAMAP" id="MF_01217">
    <property type="entry name" value="Acyl_carrier"/>
    <property type="match status" value="1"/>
</dbReference>
<dbReference type="InterPro" id="IPR003231">
    <property type="entry name" value="ACP"/>
</dbReference>
<dbReference type="InterPro" id="IPR036736">
    <property type="entry name" value="ACP-like_sf"/>
</dbReference>
<dbReference type="InterPro" id="IPR020806">
    <property type="entry name" value="PKS_PP-bd"/>
</dbReference>
<dbReference type="InterPro" id="IPR009081">
    <property type="entry name" value="PP-bd_ACP"/>
</dbReference>
<dbReference type="InterPro" id="IPR006162">
    <property type="entry name" value="Ppantetheine_attach_site"/>
</dbReference>
<dbReference type="NCBIfam" id="TIGR00517">
    <property type="entry name" value="acyl_carrier"/>
    <property type="match status" value="1"/>
</dbReference>
<dbReference type="NCBIfam" id="NF002148">
    <property type="entry name" value="PRK00982.1-2"/>
    <property type="match status" value="1"/>
</dbReference>
<dbReference type="NCBIfam" id="NF002149">
    <property type="entry name" value="PRK00982.1-3"/>
    <property type="match status" value="1"/>
</dbReference>
<dbReference type="NCBIfam" id="NF002150">
    <property type="entry name" value="PRK00982.1-4"/>
    <property type="match status" value="1"/>
</dbReference>
<dbReference type="NCBIfam" id="NF002151">
    <property type="entry name" value="PRK00982.1-5"/>
    <property type="match status" value="1"/>
</dbReference>
<dbReference type="PANTHER" id="PTHR20863">
    <property type="entry name" value="ACYL CARRIER PROTEIN"/>
    <property type="match status" value="1"/>
</dbReference>
<dbReference type="PANTHER" id="PTHR20863:SF76">
    <property type="entry name" value="CARRIER DOMAIN-CONTAINING PROTEIN"/>
    <property type="match status" value="1"/>
</dbReference>
<dbReference type="Pfam" id="PF00550">
    <property type="entry name" value="PP-binding"/>
    <property type="match status" value="1"/>
</dbReference>
<dbReference type="SMART" id="SM00823">
    <property type="entry name" value="PKS_PP"/>
    <property type="match status" value="1"/>
</dbReference>
<dbReference type="SUPFAM" id="SSF47336">
    <property type="entry name" value="ACP-like"/>
    <property type="match status" value="1"/>
</dbReference>
<dbReference type="PROSITE" id="PS50075">
    <property type="entry name" value="CARRIER"/>
    <property type="match status" value="1"/>
</dbReference>
<dbReference type="PROSITE" id="PS00012">
    <property type="entry name" value="PHOSPHOPANTETHEINE"/>
    <property type="match status" value="1"/>
</dbReference>
<name>ACP_BRUAB</name>
<proteinExistence type="inferred from homology"/>
<keyword id="KW-0963">Cytoplasm</keyword>
<keyword id="KW-0275">Fatty acid biosynthesis</keyword>
<keyword id="KW-0276">Fatty acid metabolism</keyword>
<keyword id="KW-0444">Lipid biosynthesis</keyword>
<keyword id="KW-0443">Lipid metabolism</keyword>
<keyword id="KW-0596">Phosphopantetheine</keyword>
<keyword id="KW-0597">Phosphoprotein</keyword>
<sequence>MSDTAERVKKIVVEHLGVDADKVTEGASFIDDLGADSLDTVELVMAFEEEFGVEIPDDAAETILTVGDAVKFIDKASA</sequence>
<accession>Q57EQ8</accession>
<comment type="function">
    <text evidence="1">Carrier of the growing fatty acid chain in fatty acid biosynthesis.</text>
</comment>
<comment type="pathway">
    <text evidence="1">Lipid metabolism; fatty acid biosynthesis.</text>
</comment>
<comment type="subcellular location">
    <subcellularLocation>
        <location evidence="1">Cytoplasm</location>
    </subcellularLocation>
</comment>
<comment type="PTM">
    <text evidence="1">4'-phosphopantetheine is transferred from CoA to a specific serine of apo-ACP by AcpS. This modification is essential for activity because fatty acids are bound in thioester linkage to the sulfhydryl of the prosthetic group.</text>
</comment>
<comment type="similarity">
    <text evidence="1">Belongs to the acyl carrier protein (ACP) family.</text>
</comment>
<evidence type="ECO:0000255" key="1">
    <source>
        <dbReference type="HAMAP-Rule" id="MF_01217"/>
    </source>
</evidence>
<evidence type="ECO:0000255" key="2">
    <source>
        <dbReference type="PROSITE-ProRule" id="PRU00258"/>
    </source>
</evidence>
<protein>
    <recommendedName>
        <fullName evidence="1">Acyl carrier protein</fullName>
        <shortName evidence="1">ACP</shortName>
    </recommendedName>
</protein>
<gene>
    <name evidence="1" type="primary">acpP</name>
    <name type="ordered locus">BruAb1_0481</name>
</gene>
<feature type="chain" id="PRO_1000066567" description="Acyl carrier protein">
    <location>
        <begin position="1"/>
        <end position="78"/>
    </location>
</feature>
<feature type="domain" description="Carrier" evidence="2">
    <location>
        <begin position="2"/>
        <end position="77"/>
    </location>
</feature>
<feature type="modified residue" description="O-(pantetheine 4'-phosphoryl)serine" evidence="2">
    <location>
        <position position="37"/>
    </location>
</feature>
<organism>
    <name type="scientific">Brucella abortus biovar 1 (strain 9-941)</name>
    <dbReference type="NCBI Taxonomy" id="262698"/>
    <lineage>
        <taxon>Bacteria</taxon>
        <taxon>Pseudomonadati</taxon>
        <taxon>Pseudomonadota</taxon>
        <taxon>Alphaproteobacteria</taxon>
        <taxon>Hyphomicrobiales</taxon>
        <taxon>Brucellaceae</taxon>
        <taxon>Brucella/Ochrobactrum group</taxon>
        <taxon>Brucella</taxon>
    </lineage>
</organism>